<feature type="chain" id="PRO_0000070857" description="Chaperone protein DnaJ">
    <location>
        <begin position="1"/>
        <end position="374"/>
    </location>
</feature>
<feature type="domain" description="J" evidence="1">
    <location>
        <begin position="3"/>
        <end position="67"/>
    </location>
</feature>
<feature type="repeat" description="CXXCXGXG motif">
    <location>
        <begin position="145"/>
        <end position="152"/>
    </location>
</feature>
<feature type="repeat" description="CXXCXGXG motif">
    <location>
        <begin position="162"/>
        <end position="169"/>
    </location>
</feature>
<feature type="repeat" description="CXXCXGXG motif">
    <location>
        <begin position="188"/>
        <end position="195"/>
    </location>
</feature>
<feature type="repeat" description="CXXCXGXG motif">
    <location>
        <begin position="202"/>
        <end position="209"/>
    </location>
</feature>
<feature type="zinc finger region" description="CR-type" evidence="1">
    <location>
        <begin position="132"/>
        <end position="214"/>
    </location>
</feature>
<feature type="region of interest" description="Disordered" evidence="2">
    <location>
        <begin position="99"/>
        <end position="118"/>
    </location>
</feature>
<feature type="compositionally biased region" description="Low complexity" evidence="2">
    <location>
        <begin position="103"/>
        <end position="115"/>
    </location>
</feature>
<feature type="binding site" evidence="1">
    <location>
        <position position="145"/>
    </location>
    <ligand>
        <name>Zn(2+)</name>
        <dbReference type="ChEBI" id="CHEBI:29105"/>
        <label>1</label>
    </ligand>
</feature>
<feature type="binding site" evidence="1">
    <location>
        <position position="148"/>
    </location>
    <ligand>
        <name>Zn(2+)</name>
        <dbReference type="ChEBI" id="CHEBI:29105"/>
        <label>1</label>
    </ligand>
</feature>
<feature type="binding site" evidence="1">
    <location>
        <position position="162"/>
    </location>
    <ligand>
        <name>Zn(2+)</name>
        <dbReference type="ChEBI" id="CHEBI:29105"/>
        <label>2</label>
    </ligand>
</feature>
<feature type="binding site" evidence="1">
    <location>
        <position position="165"/>
    </location>
    <ligand>
        <name>Zn(2+)</name>
        <dbReference type="ChEBI" id="CHEBI:29105"/>
        <label>2</label>
    </ligand>
</feature>
<feature type="binding site" evidence="1">
    <location>
        <position position="188"/>
    </location>
    <ligand>
        <name>Zn(2+)</name>
        <dbReference type="ChEBI" id="CHEBI:29105"/>
        <label>2</label>
    </ligand>
</feature>
<feature type="binding site" evidence="1">
    <location>
        <position position="191"/>
    </location>
    <ligand>
        <name>Zn(2+)</name>
        <dbReference type="ChEBI" id="CHEBI:29105"/>
        <label>2</label>
    </ligand>
</feature>
<feature type="binding site" evidence="1">
    <location>
        <position position="202"/>
    </location>
    <ligand>
        <name>Zn(2+)</name>
        <dbReference type="ChEBI" id="CHEBI:29105"/>
        <label>1</label>
    </ligand>
</feature>
<feature type="binding site" evidence="1">
    <location>
        <position position="205"/>
    </location>
    <ligand>
        <name>Zn(2+)</name>
        <dbReference type="ChEBI" id="CHEBI:29105"/>
        <label>1</label>
    </ligand>
</feature>
<keyword id="KW-0143">Chaperone</keyword>
<keyword id="KW-0963">Cytoplasm</keyword>
<keyword id="KW-0235">DNA replication</keyword>
<keyword id="KW-0479">Metal-binding</keyword>
<keyword id="KW-0677">Repeat</keyword>
<keyword id="KW-0346">Stress response</keyword>
<keyword id="KW-0862">Zinc</keyword>
<keyword id="KW-0863">Zinc-finger</keyword>
<name>DNAJ_PROMP</name>
<accession>Q7V3Q3</accession>
<comment type="function">
    <text evidence="1">Participates actively in the response to hyperosmotic and heat shock by preventing the aggregation of stress-denatured proteins and by disaggregating proteins, also in an autonomous, DnaK-independent fashion. Unfolded proteins bind initially to DnaJ; upon interaction with the DnaJ-bound protein, DnaK hydrolyzes its bound ATP, resulting in the formation of a stable complex. GrpE releases ADP from DnaK; ATP binding to DnaK triggers the release of the substrate protein, thus completing the reaction cycle. Several rounds of ATP-dependent interactions between DnaJ, DnaK and GrpE are required for fully efficient folding. Also involved, together with DnaK and GrpE, in the DNA replication of plasmids through activation of initiation proteins.</text>
</comment>
<comment type="cofactor">
    <cofactor evidence="1">
        <name>Zn(2+)</name>
        <dbReference type="ChEBI" id="CHEBI:29105"/>
    </cofactor>
    <text evidence="1">Binds 2 Zn(2+) ions per monomer.</text>
</comment>
<comment type="subunit">
    <text evidence="1">Homodimer.</text>
</comment>
<comment type="subcellular location">
    <subcellularLocation>
        <location evidence="1">Cytoplasm</location>
    </subcellularLocation>
</comment>
<comment type="domain">
    <text evidence="1">The J domain is necessary and sufficient to stimulate DnaK ATPase activity. Zinc center 1 plays an important role in the autonomous, DnaK-independent chaperone activity of DnaJ. Zinc center 2 is essential for interaction with DnaK and for DnaJ activity.</text>
</comment>
<comment type="similarity">
    <text evidence="1">Belongs to the DnaJ family.</text>
</comment>
<organism>
    <name type="scientific">Prochlorococcus marinus subsp. pastoris (strain CCMP1986 / NIES-2087 / MED4)</name>
    <dbReference type="NCBI Taxonomy" id="59919"/>
    <lineage>
        <taxon>Bacteria</taxon>
        <taxon>Bacillati</taxon>
        <taxon>Cyanobacteriota</taxon>
        <taxon>Cyanophyceae</taxon>
        <taxon>Synechococcales</taxon>
        <taxon>Prochlorococcaceae</taxon>
        <taxon>Prochlorococcus</taxon>
    </lineage>
</organism>
<evidence type="ECO:0000255" key="1">
    <source>
        <dbReference type="HAMAP-Rule" id="MF_01152"/>
    </source>
</evidence>
<evidence type="ECO:0000256" key="2">
    <source>
        <dbReference type="SAM" id="MobiDB-lite"/>
    </source>
</evidence>
<proteinExistence type="inferred from homology"/>
<reference key="1">
    <citation type="journal article" date="2003" name="Nature">
        <title>Genome divergence in two Prochlorococcus ecotypes reflects oceanic niche differentiation.</title>
        <authorList>
            <person name="Rocap G."/>
            <person name="Larimer F.W."/>
            <person name="Lamerdin J.E."/>
            <person name="Malfatti S."/>
            <person name="Chain P."/>
            <person name="Ahlgren N.A."/>
            <person name="Arellano A."/>
            <person name="Coleman M."/>
            <person name="Hauser L."/>
            <person name="Hess W.R."/>
            <person name="Johnson Z.I."/>
            <person name="Land M.L."/>
            <person name="Lindell D."/>
            <person name="Post A.F."/>
            <person name="Regala W."/>
            <person name="Shah M."/>
            <person name="Shaw S.L."/>
            <person name="Steglich C."/>
            <person name="Sullivan M.B."/>
            <person name="Ting C.S."/>
            <person name="Tolonen A."/>
            <person name="Webb E.A."/>
            <person name="Zinser E.R."/>
            <person name="Chisholm S.W."/>
        </authorList>
    </citation>
    <scope>NUCLEOTIDE SEQUENCE [LARGE SCALE GENOMIC DNA]</scope>
    <source>
        <strain>CCMP1986 / NIES-2087 / MED4</strain>
    </source>
</reference>
<sequence length="374" mass="40201">MADFYQILGVSRDADANTLKSAYRKLARQYHPDVNKDPGAEDKFKEIGKAYEALADPETRARYDQFGEAGIGGAAGMPDMGDMGGFGDLFETFFNGFGGQSSQGGRSQRRGPQQGDDLRYDLNIDFKDAIFGQQREINIPHLETCEVCRGTGAKKGTGPTTCTTCGGSGQVRRATRTPFGNFTQVAECPTCNGVGQIISDPCTSCGGNGVKQVRKKLRINIPAGVDSGTKLRVSGEGNVGLKGGPPGDLYVFIKVKNDSNLKREGINIYSEISVSYLQAILGDTVDIITVDGKVNLKIPSGTQPNSTLSLENKGVPRLGNPVARGNHQVLVKVKLPTRITEDERNLLEDLASKYTEQNSSSNSGLFSRLFGKDS</sequence>
<protein>
    <recommendedName>
        <fullName evidence="1">Chaperone protein DnaJ</fullName>
    </recommendedName>
</protein>
<gene>
    <name evidence="1" type="primary">dnaJ</name>
    <name type="ordered locus">PMM0017</name>
</gene>
<dbReference type="EMBL" id="BX548174">
    <property type="protein sequence ID" value="CAE18476.1"/>
    <property type="molecule type" value="Genomic_DNA"/>
</dbReference>
<dbReference type="RefSeq" id="WP_011131655.1">
    <property type="nucleotide sequence ID" value="NC_005072.1"/>
</dbReference>
<dbReference type="SMR" id="Q7V3Q3"/>
<dbReference type="STRING" id="59919.PMM0017"/>
<dbReference type="KEGG" id="pmm:PMM0017"/>
<dbReference type="eggNOG" id="COG0484">
    <property type="taxonomic scope" value="Bacteria"/>
</dbReference>
<dbReference type="HOGENOM" id="CLU_017633_0_1_3"/>
<dbReference type="OrthoDB" id="9779889at2"/>
<dbReference type="Proteomes" id="UP000001026">
    <property type="component" value="Chromosome"/>
</dbReference>
<dbReference type="GO" id="GO:0005737">
    <property type="term" value="C:cytoplasm"/>
    <property type="evidence" value="ECO:0007669"/>
    <property type="project" value="UniProtKB-SubCell"/>
</dbReference>
<dbReference type="GO" id="GO:0005524">
    <property type="term" value="F:ATP binding"/>
    <property type="evidence" value="ECO:0007669"/>
    <property type="project" value="InterPro"/>
</dbReference>
<dbReference type="GO" id="GO:0031072">
    <property type="term" value="F:heat shock protein binding"/>
    <property type="evidence" value="ECO:0007669"/>
    <property type="project" value="InterPro"/>
</dbReference>
<dbReference type="GO" id="GO:0051082">
    <property type="term" value="F:unfolded protein binding"/>
    <property type="evidence" value="ECO:0007669"/>
    <property type="project" value="UniProtKB-UniRule"/>
</dbReference>
<dbReference type="GO" id="GO:0008270">
    <property type="term" value="F:zinc ion binding"/>
    <property type="evidence" value="ECO:0007669"/>
    <property type="project" value="UniProtKB-UniRule"/>
</dbReference>
<dbReference type="GO" id="GO:0051085">
    <property type="term" value="P:chaperone cofactor-dependent protein refolding"/>
    <property type="evidence" value="ECO:0007669"/>
    <property type="project" value="TreeGrafter"/>
</dbReference>
<dbReference type="GO" id="GO:0006260">
    <property type="term" value="P:DNA replication"/>
    <property type="evidence" value="ECO:0007669"/>
    <property type="project" value="UniProtKB-KW"/>
</dbReference>
<dbReference type="GO" id="GO:0042026">
    <property type="term" value="P:protein refolding"/>
    <property type="evidence" value="ECO:0007669"/>
    <property type="project" value="TreeGrafter"/>
</dbReference>
<dbReference type="GO" id="GO:0009408">
    <property type="term" value="P:response to heat"/>
    <property type="evidence" value="ECO:0007669"/>
    <property type="project" value="InterPro"/>
</dbReference>
<dbReference type="CDD" id="cd06257">
    <property type="entry name" value="DnaJ"/>
    <property type="match status" value="1"/>
</dbReference>
<dbReference type="CDD" id="cd10747">
    <property type="entry name" value="DnaJ_C"/>
    <property type="match status" value="1"/>
</dbReference>
<dbReference type="CDD" id="cd10719">
    <property type="entry name" value="DnaJ_zf"/>
    <property type="match status" value="1"/>
</dbReference>
<dbReference type="FunFam" id="2.60.260.20:FF:000005">
    <property type="entry name" value="Chaperone protein dnaJ 1, mitochondrial"/>
    <property type="match status" value="1"/>
</dbReference>
<dbReference type="FunFam" id="2.10.230.10:FF:000002">
    <property type="entry name" value="Molecular chaperone DnaJ"/>
    <property type="match status" value="1"/>
</dbReference>
<dbReference type="Gene3D" id="1.10.287.110">
    <property type="entry name" value="DnaJ domain"/>
    <property type="match status" value="1"/>
</dbReference>
<dbReference type="Gene3D" id="2.10.230.10">
    <property type="entry name" value="Heat shock protein DnaJ, cysteine-rich domain"/>
    <property type="match status" value="1"/>
</dbReference>
<dbReference type="Gene3D" id="2.60.260.20">
    <property type="entry name" value="Urease metallochaperone UreE, N-terminal domain"/>
    <property type="match status" value="2"/>
</dbReference>
<dbReference type="HAMAP" id="MF_01152">
    <property type="entry name" value="DnaJ"/>
    <property type="match status" value="1"/>
</dbReference>
<dbReference type="InterPro" id="IPR012724">
    <property type="entry name" value="DnaJ"/>
</dbReference>
<dbReference type="InterPro" id="IPR002939">
    <property type="entry name" value="DnaJ_C"/>
</dbReference>
<dbReference type="InterPro" id="IPR001623">
    <property type="entry name" value="DnaJ_domain"/>
</dbReference>
<dbReference type="InterPro" id="IPR018253">
    <property type="entry name" value="DnaJ_domain_CS"/>
</dbReference>
<dbReference type="InterPro" id="IPR008971">
    <property type="entry name" value="HSP40/DnaJ_pept-bd"/>
</dbReference>
<dbReference type="InterPro" id="IPR001305">
    <property type="entry name" value="HSP_DnaJ_Cys-rich_dom"/>
</dbReference>
<dbReference type="InterPro" id="IPR036410">
    <property type="entry name" value="HSP_DnaJ_Cys-rich_dom_sf"/>
</dbReference>
<dbReference type="InterPro" id="IPR036869">
    <property type="entry name" value="J_dom_sf"/>
</dbReference>
<dbReference type="NCBIfam" id="TIGR02349">
    <property type="entry name" value="DnaJ_bact"/>
    <property type="match status" value="1"/>
</dbReference>
<dbReference type="NCBIfam" id="NF008035">
    <property type="entry name" value="PRK10767.1"/>
    <property type="match status" value="1"/>
</dbReference>
<dbReference type="NCBIfam" id="NF010886">
    <property type="entry name" value="PRK14293.1"/>
    <property type="match status" value="1"/>
</dbReference>
<dbReference type="PANTHER" id="PTHR43096:SF10">
    <property type="entry name" value="CHAPERONE PROTEIN DNAJ A6, CHLOROPLASTIC"/>
    <property type="match status" value="1"/>
</dbReference>
<dbReference type="PANTHER" id="PTHR43096">
    <property type="entry name" value="DNAJ HOMOLOG 1, MITOCHONDRIAL-RELATED"/>
    <property type="match status" value="1"/>
</dbReference>
<dbReference type="Pfam" id="PF00226">
    <property type="entry name" value="DnaJ"/>
    <property type="match status" value="1"/>
</dbReference>
<dbReference type="Pfam" id="PF01556">
    <property type="entry name" value="DnaJ_C"/>
    <property type="match status" value="1"/>
</dbReference>
<dbReference type="Pfam" id="PF00684">
    <property type="entry name" value="DnaJ_CXXCXGXG"/>
    <property type="match status" value="1"/>
</dbReference>
<dbReference type="PRINTS" id="PR00625">
    <property type="entry name" value="JDOMAIN"/>
</dbReference>
<dbReference type="SMART" id="SM00271">
    <property type="entry name" value="DnaJ"/>
    <property type="match status" value="1"/>
</dbReference>
<dbReference type="SUPFAM" id="SSF46565">
    <property type="entry name" value="Chaperone J-domain"/>
    <property type="match status" value="1"/>
</dbReference>
<dbReference type="SUPFAM" id="SSF57938">
    <property type="entry name" value="DnaJ/Hsp40 cysteine-rich domain"/>
    <property type="match status" value="1"/>
</dbReference>
<dbReference type="SUPFAM" id="SSF49493">
    <property type="entry name" value="HSP40/DnaJ peptide-binding domain"/>
    <property type="match status" value="2"/>
</dbReference>
<dbReference type="PROSITE" id="PS00636">
    <property type="entry name" value="DNAJ_1"/>
    <property type="match status" value="1"/>
</dbReference>
<dbReference type="PROSITE" id="PS50076">
    <property type="entry name" value="DNAJ_2"/>
    <property type="match status" value="1"/>
</dbReference>
<dbReference type="PROSITE" id="PS51188">
    <property type="entry name" value="ZF_CR"/>
    <property type="match status" value="1"/>
</dbReference>